<protein>
    <recommendedName>
        <fullName evidence="1">Small ribosomal subunit protein uS14</fullName>
    </recommendedName>
    <alternativeName>
        <fullName evidence="2">30S ribosomal protein S14 type Z</fullName>
    </alternativeName>
</protein>
<gene>
    <name evidence="1" type="primary">rpsZ</name>
    <name evidence="1" type="synonym">rpsN</name>
    <name type="ordered locus">MCAP_0683</name>
</gene>
<sequence length="61" mass="7151">MAKKSLKVKQAKHQKFNVRNYTRCNHCGRPHAVLKKFGICRLCFRKFAYEGQIPGIKKASW</sequence>
<keyword id="KW-0479">Metal-binding</keyword>
<keyword id="KW-0687">Ribonucleoprotein</keyword>
<keyword id="KW-0689">Ribosomal protein</keyword>
<keyword id="KW-0694">RNA-binding</keyword>
<keyword id="KW-0699">rRNA-binding</keyword>
<keyword id="KW-0862">Zinc</keyword>
<organism>
    <name type="scientific">Mycoplasma capricolum subsp. capricolum (strain California kid / ATCC 27343 / NCTC 10154)</name>
    <dbReference type="NCBI Taxonomy" id="340047"/>
    <lineage>
        <taxon>Bacteria</taxon>
        <taxon>Bacillati</taxon>
        <taxon>Mycoplasmatota</taxon>
        <taxon>Mollicutes</taxon>
        <taxon>Mycoplasmataceae</taxon>
        <taxon>Mycoplasma</taxon>
    </lineage>
</organism>
<dbReference type="EMBL" id="X06414">
    <property type="protein sequence ID" value="CAA29717.1"/>
    <property type="status" value="ALT_TERM"/>
    <property type="molecule type" value="Genomic_DNA"/>
</dbReference>
<dbReference type="EMBL" id="CP000123">
    <property type="protein sequence ID" value="ABC01286.1"/>
    <property type="molecule type" value="Genomic_DNA"/>
</dbReference>
<dbReference type="PIR" id="S02844">
    <property type="entry name" value="R3YM14"/>
</dbReference>
<dbReference type="RefSeq" id="WP_008362512.1">
    <property type="nucleotide sequence ID" value="NC_007633.1"/>
</dbReference>
<dbReference type="SMR" id="P10130"/>
<dbReference type="KEGG" id="mcp:MCAP_0683"/>
<dbReference type="HOGENOM" id="CLU_139869_3_0_14"/>
<dbReference type="PhylomeDB" id="P10130"/>
<dbReference type="Proteomes" id="UP000001928">
    <property type="component" value="Chromosome"/>
</dbReference>
<dbReference type="GO" id="GO:0005737">
    <property type="term" value="C:cytoplasm"/>
    <property type="evidence" value="ECO:0007669"/>
    <property type="project" value="UniProtKB-ARBA"/>
</dbReference>
<dbReference type="GO" id="GO:0015935">
    <property type="term" value="C:small ribosomal subunit"/>
    <property type="evidence" value="ECO:0007669"/>
    <property type="project" value="TreeGrafter"/>
</dbReference>
<dbReference type="GO" id="GO:0019843">
    <property type="term" value="F:rRNA binding"/>
    <property type="evidence" value="ECO:0007669"/>
    <property type="project" value="UniProtKB-UniRule"/>
</dbReference>
<dbReference type="GO" id="GO:0003735">
    <property type="term" value="F:structural constituent of ribosome"/>
    <property type="evidence" value="ECO:0007669"/>
    <property type="project" value="InterPro"/>
</dbReference>
<dbReference type="GO" id="GO:0008270">
    <property type="term" value="F:zinc ion binding"/>
    <property type="evidence" value="ECO:0007669"/>
    <property type="project" value="UniProtKB-UniRule"/>
</dbReference>
<dbReference type="GO" id="GO:0006412">
    <property type="term" value="P:translation"/>
    <property type="evidence" value="ECO:0007669"/>
    <property type="project" value="UniProtKB-UniRule"/>
</dbReference>
<dbReference type="FunFam" id="4.10.830.10:FF:000001">
    <property type="entry name" value="30S ribosomal protein S14 type Z"/>
    <property type="match status" value="1"/>
</dbReference>
<dbReference type="Gene3D" id="4.10.830.10">
    <property type="entry name" value="30s Ribosomal Protein S14, Chain N"/>
    <property type="match status" value="1"/>
</dbReference>
<dbReference type="HAMAP" id="MF_01364_B">
    <property type="entry name" value="Ribosomal_uS14_2_B"/>
    <property type="match status" value="1"/>
</dbReference>
<dbReference type="InterPro" id="IPR001209">
    <property type="entry name" value="Ribosomal_uS14"/>
</dbReference>
<dbReference type="InterPro" id="IPR023053">
    <property type="entry name" value="Ribosomal_uS14_bact"/>
</dbReference>
<dbReference type="InterPro" id="IPR018271">
    <property type="entry name" value="Ribosomal_uS14_CS"/>
</dbReference>
<dbReference type="InterPro" id="IPR043140">
    <property type="entry name" value="Ribosomal_uS14_sf"/>
</dbReference>
<dbReference type="NCBIfam" id="NF005974">
    <property type="entry name" value="PRK08061.1"/>
    <property type="match status" value="1"/>
</dbReference>
<dbReference type="PANTHER" id="PTHR19836">
    <property type="entry name" value="30S RIBOSOMAL PROTEIN S14"/>
    <property type="match status" value="1"/>
</dbReference>
<dbReference type="PANTHER" id="PTHR19836:SF19">
    <property type="entry name" value="SMALL RIBOSOMAL SUBUNIT PROTEIN US14M"/>
    <property type="match status" value="1"/>
</dbReference>
<dbReference type="Pfam" id="PF00253">
    <property type="entry name" value="Ribosomal_S14"/>
    <property type="match status" value="1"/>
</dbReference>
<dbReference type="SUPFAM" id="SSF57716">
    <property type="entry name" value="Glucocorticoid receptor-like (DNA-binding domain)"/>
    <property type="match status" value="1"/>
</dbReference>
<dbReference type="PROSITE" id="PS00527">
    <property type="entry name" value="RIBOSOMAL_S14"/>
    <property type="match status" value="1"/>
</dbReference>
<comment type="function">
    <text evidence="1">Binds 16S rRNA, required for the assembly of 30S particles and may also be responsible for determining the conformation of the 16S rRNA at the A site.</text>
</comment>
<comment type="cofactor">
    <cofactor evidence="1">
        <name>Zn(2+)</name>
        <dbReference type="ChEBI" id="CHEBI:29105"/>
    </cofactor>
    <text evidence="1">Binds 1 zinc ion per subunit.</text>
</comment>
<comment type="subunit">
    <text evidence="1">Part of the 30S ribosomal subunit. Contacts proteins S3 and S10.</text>
</comment>
<comment type="similarity">
    <text evidence="1">Belongs to the universal ribosomal protein uS14 family. Zinc-binding uS14 subfamily.</text>
</comment>
<proteinExistence type="inferred from homology"/>
<evidence type="ECO:0000255" key="1">
    <source>
        <dbReference type="HAMAP-Rule" id="MF_01364"/>
    </source>
</evidence>
<evidence type="ECO:0000305" key="2"/>
<accession>P10130</accession>
<accession>Q2SRG6</accession>
<reference key="1">
    <citation type="journal article" date="1987" name="Mol. Gen. Genet.">
        <title>The ribosomal protein gene cluster of Mycoplasma capricolum.</title>
        <authorList>
            <person name="Ohkubo S."/>
            <person name="Muto A."/>
            <person name="Kawauchi Y."/>
            <person name="Yamao F."/>
            <person name="Osawa S."/>
        </authorList>
    </citation>
    <scope>NUCLEOTIDE SEQUENCE [GENOMIC DNA]</scope>
</reference>
<reference key="2">
    <citation type="submission" date="2005-09" db="EMBL/GenBank/DDBJ databases">
        <authorList>
            <person name="Glass J.I."/>
            <person name="Lartigue C."/>
            <person name="Pfannkoch C."/>
            <person name="Baden-Tillson H."/>
            <person name="Smith H.O."/>
            <person name="Venter J.C."/>
            <person name="Roske K."/>
            <person name="Wise K.S."/>
            <person name="Calcutt M.J."/>
            <person name="Nelson W.C."/>
            <person name="Nierman W.C."/>
        </authorList>
    </citation>
    <scope>NUCLEOTIDE SEQUENCE [LARGE SCALE GENOMIC DNA]</scope>
    <source>
        <strain>California kid / ATCC 27343 / NCTC 10154</strain>
    </source>
</reference>
<feature type="chain" id="PRO_0000130904" description="Small ribosomal subunit protein uS14">
    <location>
        <begin position="1"/>
        <end position="61"/>
    </location>
</feature>
<feature type="binding site" evidence="1">
    <location>
        <position position="24"/>
    </location>
    <ligand>
        <name>Zn(2+)</name>
        <dbReference type="ChEBI" id="CHEBI:29105"/>
    </ligand>
</feature>
<feature type="binding site" evidence="1">
    <location>
        <position position="27"/>
    </location>
    <ligand>
        <name>Zn(2+)</name>
        <dbReference type="ChEBI" id="CHEBI:29105"/>
    </ligand>
</feature>
<feature type="binding site" evidence="1">
    <location>
        <position position="40"/>
    </location>
    <ligand>
        <name>Zn(2+)</name>
        <dbReference type="ChEBI" id="CHEBI:29105"/>
    </ligand>
</feature>
<feature type="binding site" evidence="1">
    <location>
        <position position="43"/>
    </location>
    <ligand>
        <name>Zn(2+)</name>
        <dbReference type="ChEBI" id="CHEBI:29105"/>
    </ligand>
</feature>
<feature type="sequence conflict" description="In Ref. 1; CAA29717." evidence="2" ref="1">
    <original>Q</original>
    <variation>P</variation>
    <location>
        <position position="14"/>
    </location>
</feature>
<feature type="sequence conflict" description="In Ref. 1." evidence="2" ref="1">
    <location>
        <position position="61"/>
    </location>
</feature>
<name>RS14Z_MYCCT</name>